<name>MUTS_ACAM1</name>
<dbReference type="EMBL" id="CP000828">
    <property type="protein sequence ID" value="ABW30546.1"/>
    <property type="molecule type" value="Genomic_DNA"/>
</dbReference>
<dbReference type="RefSeq" id="WP_012165766.1">
    <property type="nucleotide sequence ID" value="NC_009925.1"/>
</dbReference>
<dbReference type="SMR" id="B0CF30"/>
<dbReference type="STRING" id="329726.AM1_5596"/>
<dbReference type="KEGG" id="amr:AM1_5596"/>
<dbReference type="eggNOG" id="COG0249">
    <property type="taxonomic scope" value="Bacteria"/>
</dbReference>
<dbReference type="HOGENOM" id="CLU_002472_4_0_3"/>
<dbReference type="OrthoDB" id="9802448at2"/>
<dbReference type="Proteomes" id="UP000000268">
    <property type="component" value="Chromosome"/>
</dbReference>
<dbReference type="GO" id="GO:0005829">
    <property type="term" value="C:cytosol"/>
    <property type="evidence" value="ECO:0007669"/>
    <property type="project" value="TreeGrafter"/>
</dbReference>
<dbReference type="GO" id="GO:0005524">
    <property type="term" value="F:ATP binding"/>
    <property type="evidence" value="ECO:0007669"/>
    <property type="project" value="UniProtKB-UniRule"/>
</dbReference>
<dbReference type="GO" id="GO:0140664">
    <property type="term" value="F:ATP-dependent DNA damage sensor activity"/>
    <property type="evidence" value="ECO:0007669"/>
    <property type="project" value="InterPro"/>
</dbReference>
<dbReference type="GO" id="GO:0003684">
    <property type="term" value="F:damaged DNA binding"/>
    <property type="evidence" value="ECO:0007669"/>
    <property type="project" value="UniProtKB-UniRule"/>
</dbReference>
<dbReference type="GO" id="GO:0030983">
    <property type="term" value="F:mismatched DNA binding"/>
    <property type="evidence" value="ECO:0007669"/>
    <property type="project" value="InterPro"/>
</dbReference>
<dbReference type="GO" id="GO:0006298">
    <property type="term" value="P:mismatch repair"/>
    <property type="evidence" value="ECO:0007669"/>
    <property type="project" value="UniProtKB-UniRule"/>
</dbReference>
<dbReference type="CDD" id="cd03284">
    <property type="entry name" value="ABC_MutS1"/>
    <property type="match status" value="1"/>
</dbReference>
<dbReference type="FunFam" id="1.10.1420.10:FF:000001">
    <property type="entry name" value="DNA mismatch repair protein MutS"/>
    <property type="match status" value="1"/>
</dbReference>
<dbReference type="FunFam" id="3.40.50.300:FF:000870">
    <property type="entry name" value="MutS protein homolog 4"/>
    <property type="match status" value="1"/>
</dbReference>
<dbReference type="Gene3D" id="1.10.1420.10">
    <property type="match status" value="2"/>
</dbReference>
<dbReference type="Gene3D" id="3.40.1170.10">
    <property type="entry name" value="DNA repair protein MutS, domain I"/>
    <property type="match status" value="1"/>
</dbReference>
<dbReference type="Gene3D" id="3.30.420.110">
    <property type="entry name" value="MutS, connector domain"/>
    <property type="match status" value="1"/>
</dbReference>
<dbReference type="Gene3D" id="3.40.50.300">
    <property type="entry name" value="P-loop containing nucleotide triphosphate hydrolases"/>
    <property type="match status" value="1"/>
</dbReference>
<dbReference type="HAMAP" id="MF_00096">
    <property type="entry name" value="MutS"/>
    <property type="match status" value="1"/>
</dbReference>
<dbReference type="InterPro" id="IPR005748">
    <property type="entry name" value="DNA_mismatch_repair_MutS"/>
</dbReference>
<dbReference type="InterPro" id="IPR007695">
    <property type="entry name" value="DNA_mismatch_repair_MutS-lik_N"/>
</dbReference>
<dbReference type="InterPro" id="IPR017261">
    <property type="entry name" value="DNA_mismatch_repair_MutS/MSH"/>
</dbReference>
<dbReference type="InterPro" id="IPR000432">
    <property type="entry name" value="DNA_mismatch_repair_MutS_C"/>
</dbReference>
<dbReference type="InterPro" id="IPR007861">
    <property type="entry name" value="DNA_mismatch_repair_MutS_clamp"/>
</dbReference>
<dbReference type="InterPro" id="IPR007696">
    <property type="entry name" value="DNA_mismatch_repair_MutS_core"/>
</dbReference>
<dbReference type="InterPro" id="IPR016151">
    <property type="entry name" value="DNA_mismatch_repair_MutS_N"/>
</dbReference>
<dbReference type="InterPro" id="IPR036187">
    <property type="entry name" value="DNA_mismatch_repair_MutS_sf"/>
</dbReference>
<dbReference type="InterPro" id="IPR007860">
    <property type="entry name" value="DNA_mmatch_repair_MutS_con_dom"/>
</dbReference>
<dbReference type="InterPro" id="IPR045076">
    <property type="entry name" value="MutS"/>
</dbReference>
<dbReference type="InterPro" id="IPR036678">
    <property type="entry name" value="MutS_con_dom_sf"/>
</dbReference>
<dbReference type="InterPro" id="IPR027417">
    <property type="entry name" value="P-loop_NTPase"/>
</dbReference>
<dbReference type="NCBIfam" id="TIGR01070">
    <property type="entry name" value="mutS1"/>
    <property type="match status" value="1"/>
</dbReference>
<dbReference type="NCBIfam" id="NF003810">
    <property type="entry name" value="PRK05399.1"/>
    <property type="match status" value="1"/>
</dbReference>
<dbReference type="PANTHER" id="PTHR11361:SF34">
    <property type="entry name" value="DNA MISMATCH REPAIR PROTEIN MSH1, MITOCHONDRIAL"/>
    <property type="match status" value="1"/>
</dbReference>
<dbReference type="PANTHER" id="PTHR11361">
    <property type="entry name" value="DNA MISMATCH REPAIR PROTEIN MUTS FAMILY MEMBER"/>
    <property type="match status" value="1"/>
</dbReference>
<dbReference type="Pfam" id="PF01624">
    <property type="entry name" value="MutS_I"/>
    <property type="match status" value="1"/>
</dbReference>
<dbReference type="Pfam" id="PF05188">
    <property type="entry name" value="MutS_II"/>
    <property type="match status" value="1"/>
</dbReference>
<dbReference type="Pfam" id="PF05192">
    <property type="entry name" value="MutS_III"/>
    <property type="match status" value="1"/>
</dbReference>
<dbReference type="Pfam" id="PF05190">
    <property type="entry name" value="MutS_IV"/>
    <property type="match status" value="1"/>
</dbReference>
<dbReference type="Pfam" id="PF00488">
    <property type="entry name" value="MutS_V"/>
    <property type="match status" value="1"/>
</dbReference>
<dbReference type="PIRSF" id="PIRSF037677">
    <property type="entry name" value="DNA_mis_repair_Msh6"/>
    <property type="match status" value="1"/>
</dbReference>
<dbReference type="SMART" id="SM00534">
    <property type="entry name" value="MUTSac"/>
    <property type="match status" value="1"/>
</dbReference>
<dbReference type="SMART" id="SM00533">
    <property type="entry name" value="MUTSd"/>
    <property type="match status" value="1"/>
</dbReference>
<dbReference type="SUPFAM" id="SSF55271">
    <property type="entry name" value="DNA repair protein MutS, domain I"/>
    <property type="match status" value="1"/>
</dbReference>
<dbReference type="SUPFAM" id="SSF53150">
    <property type="entry name" value="DNA repair protein MutS, domain II"/>
    <property type="match status" value="1"/>
</dbReference>
<dbReference type="SUPFAM" id="SSF48334">
    <property type="entry name" value="DNA repair protein MutS, domain III"/>
    <property type="match status" value="1"/>
</dbReference>
<dbReference type="SUPFAM" id="SSF52540">
    <property type="entry name" value="P-loop containing nucleoside triphosphate hydrolases"/>
    <property type="match status" value="1"/>
</dbReference>
<dbReference type="PROSITE" id="PS00486">
    <property type="entry name" value="DNA_MISMATCH_REPAIR_2"/>
    <property type="match status" value="1"/>
</dbReference>
<sequence length="883" mass="97886">MSDSVAPDVPVIREGKNPAQHRDRTTVDREALSPMMRHYVDLKDEYPQTILLYRMGDFYETFFEDACTIAQALELVLTSRQSGNEVGRVAMAGIPHHQLDRYSRLLVEKGFAVAICDQMEDPAQAQGLVKREVTRVITPGTLLEEGMLNARSNNFLAAFVLAGNHWGLAYADISTGEFLTTQFSERETLAQELLRLQPSEVLFPTDAPDIQQILRPGEQSDLLPEGLPNQFCYSLRSQTSFTQAEARQRIQEVYGVRSLEGLGCEHLPLAVRAAGGLLAYLEATQKDTHIPLQPLATYTLSQYLVLDHQSRRNLELTQTSRDGTFRGSLLWAIDRTRTAMGSRALRRWLLQPLLDLNDIQARQAAITELLPQTGFRKELQNQLQKIYDLERLAGRAGSGTANARDLVALAESLGQLTELSHKVAKCEAQYLQALQTVPPILDQLAQRLRAHLVESPPISLTEGGLIKPSVNPELDQMRQQIVSDQQWIANLEKDERERTGISTLKVGFNKAFGYFISISRAKADQAPDDYIRKQTLTNEERFITPELKEREARIFTAQTEQFQLEYDLFVTLRTEVGEQASLIRTVAAAVSAVDILVGLTEVAVYQGYCCPTMSDSREIQILDGRHPVVEQSLPPGFFVPNATELGSAPSAELTPHPDLVILTGPNASGKSCYLRQVGLIQLMAQIGSYVPAQSARLGICDRIFTRVGAVDDLATGQSTFMVEMNETANILNHASSKSLVLLDEIGRGTATFDGLAIAWSVAEHLAAVIQARTIFATHYHELNELASLVENVANYQVLVKELPDQIIFLHQVCPGGASRSYGIEAGRLAGLPPSVIKRAKQVMKQIEQHSKIAVGLRKGNTQPRARKSSAETEAKTQQFELPF</sequence>
<accession>B0CF30</accession>
<protein>
    <recommendedName>
        <fullName evidence="1">DNA mismatch repair protein MutS</fullName>
    </recommendedName>
</protein>
<comment type="function">
    <text evidence="1">This protein is involved in the repair of mismatches in DNA. It is possible that it carries out the mismatch recognition step. This protein has a weak ATPase activity.</text>
</comment>
<comment type="similarity">
    <text evidence="1">Belongs to the DNA mismatch repair MutS family.</text>
</comment>
<reference key="1">
    <citation type="journal article" date="2008" name="Proc. Natl. Acad. Sci. U.S.A.">
        <title>Niche adaptation and genome expansion in the chlorophyll d-producing cyanobacterium Acaryochloris marina.</title>
        <authorList>
            <person name="Swingley W.D."/>
            <person name="Chen M."/>
            <person name="Cheung P.C."/>
            <person name="Conrad A.L."/>
            <person name="Dejesa L.C."/>
            <person name="Hao J."/>
            <person name="Honchak B.M."/>
            <person name="Karbach L.E."/>
            <person name="Kurdoglu A."/>
            <person name="Lahiri S."/>
            <person name="Mastrian S.D."/>
            <person name="Miyashita H."/>
            <person name="Page L."/>
            <person name="Ramakrishna P."/>
            <person name="Satoh S."/>
            <person name="Sattley W.M."/>
            <person name="Shimada Y."/>
            <person name="Taylor H.L."/>
            <person name="Tomo T."/>
            <person name="Tsuchiya T."/>
            <person name="Wang Z.T."/>
            <person name="Raymond J."/>
            <person name="Mimuro M."/>
            <person name="Blankenship R.E."/>
            <person name="Touchman J.W."/>
        </authorList>
    </citation>
    <scope>NUCLEOTIDE SEQUENCE [LARGE SCALE GENOMIC DNA]</scope>
    <source>
        <strain>MBIC 11017</strain>
    </source>
</reference>
<keyword id="KW-0067">ATP-binding</keyword>
<keyword id="KW-0227">DNA damage</keyword>
<keyword id="KW-0234">DNA repair</keyword>
<keyword id="KW-0238">DNA-binding</keyword>
<keyword id="KW-0547">Nucleotide-binding</keyword>
<keyword id="KW-1185">Reference proteome</keyword>
<feature type="chain" id="PRO_0000335100" description="DNA mismatch repair protein MutS">
    <location>
        <begin position="1"/>
        <end position="883"/>
    </location>
</feature>
<feature type="region of interest" description="Disordered" evidence="2">
    <location>
        <begin position="1"/>
        <end position="25"/>
    </location>
</feature>
<feature type="region of interest" description="Disordered" evidence="2">
    <location>
        <begin position="857"/>
        <end position="883"/>
    </location>
</feature>
<feature type="compositionally biased region" description="Basic and acidic residues" evidence="2">
    <location>
        <begin position="11"/>
        <end position="25"/>
    </location>
</feature>
<feature type="binding site" evidence="1">
    <location>
        <begin position="664"/>
        <end position="671"/>
    </location>
    <ligand>
        <name>ATP</name>
        <dbReference type="ChEBI" id="CHEBI:30616"/>
    </ligand>
</feature>
<evidence type="ECO:0000255" key="1">
    <source>
        <dbReference type="HAMAP-Rule" id="MF_00096"/>
    </source>
</evidence>
<evidence type="ECO:0000256" key="2">
    <source>
        <dbReference type="SAM" id="MobiDB-lite"/>
    </source>
</evidence>
<gene>
    <name evidence="1" type="primary">mutS</name>
    <name type="ordered locus">AM1_5596</name>
</gene>
<organism>
    <name type="scientific">Acaryochloris marina (strain MBIC 11017)</name>
    <dbReference type="NCBI Taxonomy" id="329726"/>
    <lineage>
        <taxon>Bacteria</taxon>
        <taxon>Bacillati</taxon>
        <taxon>Cyanobacteriota</taxon>
        <taxon>Cyanophyceae</taxon>
        <taxon>Acaryochloridales</taxon>
        <taxon>Acaryochloridaceae</taxon>
        <taxon>Acaryochloris</taxon>
    </lineage>
</organism>
<proteinExistence type="inferred from homology"/>